<sequence>MARKPALSPEEARAEALGTALATIERKYGKGAVMKLSDDAHVNIPVIPTGSIGLDLALGVGGIPRGRISEIFGPESSGKTTLTLHIIAECQRLGGTCAFVDAEHALDVSYARRLGVNTDELLISQPDYGEQALDIADMLVRSGAVDLVVVDSVAALIPQAELEGDMGETQVGGHARLMSHAMRRLTGTIHKSRTSVIFINQIRMKIGVTGYGSPETTTGGNALKFYSSVRLDIRRIQTLKDKEESFGSRTRVKVVKNKVAPPFRSAVFDILYGLGISRAGELLDLGIEAKIIDQSGSWFAFGAEKLGQGREKVRALLDENIDLRNQIEAKVVEFLGLHPREFTPTAEDIAESQDPVLED</sequence>
<feature type="chain" id="PRO_1000193304" description="Protein RecA">
    <location>
        <begin position="1"/>
        <end position="359"/>
    </location>
</feature>
<feature type="binding site" evidence="1">
    <location>
        <begin position="73"/>
        <end position="80"/>
    </location>
    <ligand>
        <name>ATP</name>
        <dbReference type="ChEBI" id="CHEBI:30616"/>
    </ligand>
</feature>
<evidence type="ECO:0000255" key="1">
    <source>
        <dbReference type="HAMAP-Rule" id="MF_00268"/>
    </source>
</evidence>
<organism>
    <name type="scientific">Desulfovibrio desulfuricans (strain ATCC 27774 / DSM 6949 / MB)</name>
    <dbReference type="NCBI Taxonomy" id="525146"/>
    <lineage>
        <taxon>Bacteria</taxon>
        <taxon>Pseudomonadati</taxon>
        <taxon>Thermodesulfobacteriota</taxon>
        <taxon>Desulfovibrionia</taxon>
        <taxon>Desulfovibrionales</taxon>
        <taxon>Desulfovibrionaceae</taxon>
        <taxon>Desulfovibrio</taxon>
    </lineage>
</organism>
<reference key="1">
    <citation type="submission" date="2009-01" db="EMBL/GenBank/DDBJ databases">
        <title>Complete sequence of Desulfovibrio desulfuricans subsp. desulfuricans str. ATCC 27774.</title>
        <authorList>
            <consortium name="US DOE Joint Genome Institute"/>
            <person name="Lucas S."/>
            <person name="Copeland A."/>
            <person name="Lapidus A."/>
            <person name="Glavina del Rio T."/>
            <person name="Tice H."/>
            <person name="Bruce D."/>
            <person name="Goodwin L."/>
            <person name="Pitluck S."/>
            <person name="Sims D."/>
            <person name="Lu M."/>
            <person name="Kiss H."/>
            <person name="Meineke L."/>
            <person name="Brettin T."/>
            <person name="Detter J.C."/>
            <person name="Han C."/>
            <person name="Larimer F."/>
            <person name="Land M."/>
            <person name="Hauser L."/>
            <person name="Kyrpides N."/>
            <person name="Ovchinnikova G."/>
            <person name="Hazen T.C."/>
        </authorList>
    </citation>
    <scope>NUCLEOTIDE SEQUENCE [LARGE SCALE GENOMIC DNA]</scope>
    <source>
        <strain>ATCC 27774 / DSM 6949 / MB</strain>
    </source>
</reference>
<gene>
    <name evidence="1" type="primary">recA</name>
    <name type="ordered locus">Ddes_0291</name>
</gene>
<keyword id="KW-0067">ATP-binding</keyword>
<keyword id="KW-0963">Cytoplasm</keyword>
<keyword id="KW-0227">DNA damage</keyword>
<keyword id="KW-0233">DNA recombination</keyword>
<keyword id="KW-0234">DNA repair</keyword>
<keyword id="KW-0238">DNA-binding</keyword>
<keyword id="KW-0547">Nucleotide-binding</keyword>
<keyword id="KW-0742">SOS response</keyword>
<dbReference type="EMBL" id="CP001358">
    <property type="protein sequence ID" value="ACL48206.1"/>
    <property type="molecule type" value="Genomic_DNA"/>
</dbReference>
<dbReference type="SMR" id="B8J369"/>
<dbReference type="STRING" id="525146.Ddes_0291"/>
<dbReference type="KEGG" id="dds:Ddes_0291"/>
<dbReference type="eggNOG" id="COG0468">
    <property type="taxonomic scope" value="Bacteria"/>
</dbReference>
<dbReference type="HOGENOM" id="CLU_040469_3_2_7"/>
<dbReference type="GO" id="GO:0005829">
    <property type="term" value="C:cytosol"/>
    <property type="evidence" value="ECO:0007669"/>
    <property type="project" value="TreeGrafter"/>
</dbReference>
<dbReference type="GO" id="GO:0005524">
    <property type="term" value="F:ATP binding"/>
    <property type="evidence" value="ECO:0007669"/>
    <property type="project" value="UniProtKB-UniRule"/>
</dbReference>
<dbReference type="GO" id="GO:0016887">
    <property type="term" value="F:ATP hydrolysis activity"/>
    <property type="evidence" value="ECO:0007669"/>
    <property type="project" value="InterPro"/>
</dbReference>
<dbReference type="GO" id="GO:0140664">
    <property type="term" value="F:ATP-dependent DNA damage sensor activity"/>
    <property type="evidence" value="ECO:0007669"/>
    <property type="project" value="InterPro"/>
</dbReference>
<dbReference type="GO" id="GO:0003684">
    <property type="term" value="F:damaged DNA binding"/>
    <property type="evidence" value="ECO:0007669"/>
    <property type="project" value="UniProtKB-UniRule"/>
</dbReference>
<dbReference type="GO" id="GO:0003697">
    <property type="term" value="F:single-stranded DNA binding"/>
    <property type="evidence" value="ECO:0007669"/>
    <property type="project" value="UniProtKB-UniRule"/>
</dbReference>
<dbReference type="GO" id="GO:0006310">
    <property type="term" value="P:DNA recombination"/>
    <property type="evidence" value="ECO:0007669"/>
    <property type="project" value="UniProtKB-UniRule"/>
</dbReference>
<dbReference type="GO" id="GO:0006281">
    <property type="term" value="P:DNA repair"/>
    <property type="evidence" value="ECO:0007669"/>
    <property type="project" value="UniProtKB-UniRule"/>
</dbReference>
<dbReference type="GO" id="GO:0009432">
    <property type="term" value="P:SOS response"/>
    <property type="evidence" value="ECO:0007669"/>
    <property type="project" value="UniProtKB-UniRule"/>
</dbReference>
<dbReference type="CDD" id="cd00983">
    <property type="entry name" value="RecA"/>
    <property type="match status" value="1"/>
</dbReference>
<dbReference type="FunFam" id="3.40.50.300:FF:000087">
    <property type="entry name" value="Recombinase RecA"/>
    <property type="match status" value="1"/>
</dbReference>
<dbReference type="Gene3D" id="3.40.50.300">
    <property type="entry name" value="P-loop containing nucleotide triphosphate hydrolases"/>
    <property type="match status" value="1"/>
</dbReference>
<dbReference type="HAMAP" id="MF_00268">
    <property type="entry name" value="RecA"/>
    <property type="match status" value="1"/>
</dbReference>
<dbReference type="InterPro" id="IPR003593">
    <property type="entry name" value="AAA+_ATPase"/>
</dbReference>
<dbReference type="InterPro" id="IPR013765">
    <property type="entry name" value="DNA_recomb/repair_RecA"/>
</dbReference>
<dbReference type="InterPro" id="IPR020584">
    <property type="entry name" value="DNA_recomb/repair_RecA_CS"/>
</dbReference>
<dbReference type="InterPro" id="IPR027417">
    <property type="entry name" value="P-loop_NTPase"/>
</dbReference>
<dbReference type="InterPro" id="IPR049261">
    <property type="entry name" value="RecA-like_C"/>
</dbReference>
<dbReference type="InterPro" id="IPR049428">
    <property type="entry name" value="RecA-like_N"/>
</dbReference>
<dbReference type="InterPro" id="IPR020588">
    <property type="entry name" value="RecA_ATP-bd"/>
</dbReference>
<dbReference type="InterPro" id="IPR023400">
    <property type="entry name" value="RecA_C_sf"/>
</dbReference>
<dbReference type="InterPro" id="IPR020587">
    <property type="entry name" value="RecA_monomer-monomer_interface"/>
</dbReference>
<dbReference type="NCBIfam" id="TIGR02012">
    <property type="entry name" value="tigrfam_recA"/>
    <property type="match status" value="1"/>
</dbReference>
<dbReference type="PANTHER" id="PTHR45900:SF1">
    <property type="entry name" value="MITOCHONDRIAL DNA REPAIR PROTEIN RECA HOMOLOG-RELATED"/>
    <property type="match status" value="1"/>
</dbReference>
<dbReference type="PANTHER" id="PTHR45900">
    <property type="entry name" value="RECA"/>
    <property type="match status" value="1"/>
</dbReference>
<dbReference type="Pfam" id="PF00154">
    <property type="entry name" value="RecA"/>
    <property type="match status" value="1"/>
</dbReference>
<dbReference type="Pfam" id="PF21096">
    <property type="entry name" value="RecA_C"/>
    <property type="match status" value="1"/>
</dbReference>
<dbReference type="PRINTS" id="PR00142">
    <property type="entry name" value="RECA"/>
</dbReference>
<dbReference type="SMART" id="SM00382">
    <property type="entry name" value="AAA"/>
    <property type="match status" value="1"/>
</dbReference>
<dbReference type="SUPFAM" id="SSF52540">
    <property type="entry name" value="P-loop containing nucleoside triphosphate hydrolases"/>
    <property type="match status" value="1"/>
</dbReference>
<dbReference type="SUPFAM" id="SSF54752">
    <property type="entry name" value="RecA protein, C-terminal domain"/>
    <property type="match status" value="1"/>
</dbReference>
<dbReference type="PROSITE" id="PS00321">
    <property type="entry name" value="RECA_1"/>
    <property type="match status" value="1"/>
</dbReference>
<dbReference type="PROSITE" id="PS50162">
    <property type="entry name" value="RECA_2"/>
    <property type="match status" value="1"/>
</dbReference>
<dbReference type="PROSITE" id="PS50163">
    <property type="entry name" value="RECA_3"/>
    <property type="match status" value="1"/>
</dbReference>
<proteinExistence type="inferred from homology"/>
<accession>B8J369</accession>
<comment type="function">
    <text evidence="1">Can catalyze the hydrolysis of ATP in the presence of single-stranded DNA, the ATP-dependent uptake of single-stranded DNA by duplex DNA, and the ATP-dependent hybridization of homologous single-stranded DNAs. It interacts with LexA causing its activation and leading to its autocatalytic cleavage.</text>
</comment>
<comment type="subcellular location">
    <subcellularLocation>
        <location evidence="1">Cytoplasm</location>
    </subcellularLocation>
</comment>
<comment type="similarity">
    <text evidence="1">Belongs to the RecA family.</text>
</comment>
<name>RECA_DESDA</name>
<protein>
    <recommendedName>
        <fullName evidence="1">Protein RecA</fullName>
    </recommendedName>
    <alternativeName>
        <fullName evidence="1">Recombinase A</fullName>
    </alternativeName>
</protein>